<organism>
    <name type="scientific">Oryza sativa subsp. japonica</name>
    <name type="common">Rice</name>
    <dbReference type="NCBI Taxonomy" id="39947"/>
    <lineage>
        <taxon>Eukaryota</taxon>
        <taxon>Viridiplantae</taxon>
        <taxon>Streptophyta</taxon>
        <taxon>Embryophyta</taxon>
        <taxon>Tracheophyta</taxon>
        <taxon>Spermatophyta</taxon>
        <taxon>Magnoliopsida</taxon>
        <taxon>Liliopsida</taxon>
        <taxon>Poales</taxon>
        <taxon>Poaceae</taxon>
        <taxon>BOP clade</taxon>
        <taxon>Oryzoideae</taxon>
        <taxon>Oryzeae</taxon>
        <taxon>Oryzinae</taxon>
        <taxon>Oryza</taxon>
        <taxon>Oryza sativa</taxon>
    </lineage>
</organism>
<proteinExistence type="evidence at protein level"/>
<comment type="function">
    <text evidence="4">Enzyme of the diterpenoid metabolism involved in the biosynthesis of the oryzalexin class of phytoalexins. Hydroxylates ent-sandaracopimaradien.</text>
</comment>
<comment type="catalytic activity">
    <reaction evidence="4">
        <text>ent-sandaracopimaradien-3beta-ol + reduced [NADPH--hemoprotein reductase] + O2 = oryzalexin E + oxidized [NADPH--hemoprotein reductase] + H2O + H(+)</text>
        <dbReference type="Rhea" id="RHEA:41468"/>
        <dbReference type="Rhea" id="RHEA-COMP:11964"/>
        <dbReference type="Rhea" id="RHEA-COMP:11965"/>
        <dbReference type="ChEBI" id="CHEBI:15377"/>
        <dbReference type="ChEBI" id="CHEBI:15378"/>
        <dbReference type="ChEBI" id="CHEBI:15379"/>
        <dbReference type="ChEBI" id="CHEBI:57618"/>
        <dbReference type="ChEBI" id="CHEBI:58210"/>
        <dbReference type="ChEBI" id="CHEBI:78255"/>
        <dbReference type="ChEBI" id="CHEBI:78259"/>
        <dbReference type="EC" id="1.14.14.122"/>
    </reaction>
</comment>
<comment type="cofactor">
    <cofactor evidence="1">
        <name>heme</name>
        <dbReference type="ChEBI" id="CHEBI:30413"/>
    </cofactor>
</comment>
<comment type="subcellular location">
    <subcellularLocation>
        <location evidence="2">Membrane</location>
        <topology evidence="2">Single-pass membrane protein</topology>
    </subcellularLocation>
</comment>
<comment type="induction">
    <text evidence="4">Up-regulated by methyl jasmonate.</text>
</comment>
<comment type="similarity">
    <text evidence="3">Belongs to the cytochrome P450 family.</text>
</comment>
<comment type="sequence caution" evidence="6">
    <conflict type="erroneous gene model prediction">
        <sequence resource="EMBL-CDS" id="EAZ23505"/>
    </conflict>
</comment>
<keyword id="KW-0349">Heme</keyword>
<keyword id="KW-0408">Iron</keyword>
<keyword id="KW-0472">Membrane</keyword>
<keyword id="KW-0479">Metal-binding</keyword>
<keyword id="KW-0503">Monooxygenase</keyword>
<keyword id="KW-0560">Oxidoreductase</keyword>
<keyword id="KW-0611">Plant defense</keyword>
<keyword id="KW-1185">Reference proteome</keyword>
<keyword id="KW-0812">Transmembrane</keyword>
<keyword id="KW-1133">Transmembrane helix</keyword>
<feature type="chain" id="PRO_0000430727" description="Cytochrome P450 76M5">
    <location>
        <begin position="1"/>
        <end position="501"/>
    </location>
</feature>
<feature type="transmembrane region" description="Helical" evidence="2">
    <location>
        <begin position="5"/>
        <end position="25"/>
    </location>
</feature>
<feature type="binding site" description="axial binding residue" evidence="1">
    <location>
        <position position="443"/>
    </location>
    <ligand>
        <name>heme</name>
        <dbReference type="ChEBI" id="CHEBI:30413"/>
    </ligand>
    <ligandPart>
        <name>Fe</name>
        <dbReference type="ChEBI" id="CHEBI:18248"/>
    </ligandPart>
</feature>
<feature type="sequence conflict" description="In Ref. 5; AK059010." ref="5">
    <original>I</original>
    <variation>T</variation>
    <location>
        <position position="296"/>
    </location>
</feature>
<gene>
    <name evidence="5" type="primary">CYP76M5</name>
    <name evidence="8" type="ordered locus">Os02g0569000</name>
    <name evidence="6" type="ordered locus">LOC_Os02g36030</name>
    <name evidence="9" type="ORF">OsJ_07201</name>
    <name evidence="7" type="ORF">P0025F02.20</name>
</gene>
<name>C76M5_ORYSJ</name>
<sequence>METRELWVLAAALAVSLLYYLAALMRYAGGGCSRSSRPPLPPGPTPLPLIGNLLSLRGVLHHRLASLARVHGPVMALRLGLTTAVVVSSRDAAAEAFTKHDRRLAARVVPDSNRAHGFSDRSIIWLPSSDPRWKALRGIQATHLFSPRGLAAVRSVRESKVRDIVAYFRSRAGEEVVFGEAIYSGVLNLVSSSFFSVNMAGVGSEEAHGLRELVEDLVEAIAKPNVSDLFPFLRQLDLQGLRRRTEERMARAFGILDGIIDRRLANRTHGDRHGDFLDALLDLVSEGKMARDHVTIMLFEVFGAGSDTMSVSLEWAMAELLRNPRAMRKARAELEDAAAVVEESDAARLPYLQAVVKEAMRLHPVGPILLPHRAVEDGVEIGGYAVPRGAMVIFNAWAIMRDPAAWERPDEFVPERFMETTTAIDFRGKEYEYLPFGSGRRLCPGLPLAERVVPFVLASLLRAFEWRLPDGVSAEDLDVSERFNTANVLAVPLKVVPVIVN</sequence>
<dbReference type="EC" id="1.14.14.122" evidence="4"/>
<dbReference type="EMBL" id="AP006069">
    <property type="protein sequence ID" value="BAD17782.1"/>
    <property type="molecule type" value="Genomic_DNA"/>
</dbReference>
<dbReference type="EMBL" id="AP008208">
    <property type="protein sequence ID" value="BAF09097.1"/>
    <property type="molecule type" value="Genomic_DNA"/>
</dbReference>
<dbReference type="EMBL" id="AP014958">
    <property type="protein sequence ID" value="BAS79330.1"/>
    <property type="molecule type" value="Genomic_DNA"/>
</dbReference>
<dbReference type="EMBL" id="CM000139">
    <property type="protein sequence ID" value="EAZ23505.1"/>
    <property type="status" value="ALT_SEQ"/>
    <property type="molecule type" value="Genomic_DNA"/>
</dbReference>
<dbReference type="EMBL" id="AK059010">
    <property type="status" value="NOT_ANNOTATED_CDS"/>
    <property type="molecule type" value="mRNA"/>
</dbReference>
<dbReference type="RefSeq" id="XP_015624125.1">
    <property type="nucleotide sequence ID" value="XM_015768639.1"/>
</dbReference>
<dbReference type="SMR" id="Q6YTF5"/>
<dbReference type="FunCoup" id="Q6YTF5">
    <property type="interactions" value="444"/>
</dbReference>
<dbReference type="STRING" id="39947.Q6YTF5"/>
<dbReference type="PaxDb" id="39947-Q6YTF5"/>
<dbReference type="EnsemblPlants" id="Os02t0569000-01">
    <property type="protein sequence ID" value="Os02t0569000-01"/>
    <property type="gene ID" value="Os02g0569000"/>
</dbReference>
<dbReference type="Gramene" id="Os02t0569000-01">
    <property type="protein sequence ID" value="Os02t0569000-01"/>
    <property type="gene ID" value="Os02g0569000"/>
</dbReference>
<dbReference type="KEGG" id="dosa:Os02g0569000"/>
<dbReference type="eggNOG" id="KOG0156">
    <property type="taxonomic scope" value="Eukaryota"/>
</dbReference>
<dbReference type="HOGENOM" id="CLU_001570_4_2_1"/>
<dbReference type="InParanoid" id="Q6YTF5"/>
<dbReference type="OMA" id="SDRSVIW"/>
<dbReference type="OrthoDB" id="686267at2759"/>
<dbReference type="Proteomes" id="UP000000763">
    <property type="component" value="Chromosome 2"/>
</dbReference>
<dbReference type="Proteomes" id="UP000007752">
    <property type="component" value="Chromosome 2"/>
</dbReference>
<dbReference type="Proteomes" id="UP000059680">
    <property type="component" value="Chromosome 2"/>
</dbReference>
<dbReference type="GO" id="GO:0016020">
    <property type="term" value="C:membrane"/>
    <property type="evidence" value="ECO:0000318"/>
    <property type="project" value="GO_Central"/>
</dbReference>
<dbReference type="GO" id="GO:0102597">
    <property type="term" value="F:3alpha-hydroxy-ent-sandaracopimardiene 9-beta-monooxygenase activity"/>
    <property type="evidence" value="ECO:0000314"/>
    <property type="project" value="UniProtKB"/>
</dbReference>
<dbReference type="GO" id="GO:0020037">
    <property type="term" value="F:heme binding"/>
    <property type="evidence" value="ECO:0007669"/>
    <property type="project" value="InterPro"/>
</dbReference>
<dbReference type="GO" id="GO:0005506">
    <property type="term" value="F:iron ion binding"/>
    <property type="evidence" value="ECO:0007669"/>
    <property type="project" value="InterPro"/>
</dbReference>
<dbReference type="GO" id="GO:0004497">
    <property type="term" value="F:monooxygenase activity"/>
    <property type="evidence" value="ECO:0000314"/>
    <property type="project" value="UniProtKB"/>
</dbReference>
<dbReference type="GO" id="GO:0016709">
    <property type="term" value="F:oxidoreductase activity, acting on paired donors, with incorporation or reduction of molecular oxygen, NAD(P)H as one donor, and incorporation of one atom of oxygen"/>
    <property type="evidence" value="ECO:0000318"/>
    <property type="project" value="GO_Central"/>
</dbReference>
<dbReference type="GO" id="GO:0006952">
    <property type="term" value="P:defense response"/>
    <property type="evidence" value="ECO:0007669"/>
    <property type="project" value="UniProtKB-KW"/>
</dbReference>
<dbReference type="GO" id="GO:0051502">
    <property type="term" value="P:diterpene phytoalexin biosynthetic process"/>
    <property type="evidence" value="ECO:0000314"/>
    <property type="project" value="UniProtKB"/>
</dbReference>
<dbReference type="CDD" id="cd11073">
    <property type="entry name" value="CYP76-like"/>
    <property type="match status" value="1"/>
</dbReference>
<dbReference type="FunFam" id="1.10.630.10:FF:000007">
    <property type="entry name" value="Cytochrome P450 76C4"/>
    <property type="match status" value="1"/>
</dbReference>
<dbReference type="Gene3D" id="1.10.630.10">
    <property type="entry name" value="Cytochrome P450"/>
    <property type="match status" value="1"/>
</dbReference>
<dbReference type="InterPro" id="IPR001128">
    <property type="entry name" value="Cyt_P450"/>
</dbReference>
<dbReference type="InterPro" id="IPR017972">
    <property type="entry name" value="Cyt_P450_CS"/>
</dbReference>
<dbReference type="InterPro" id="IPR002401">
    <property type="entry name" value="Cyt_P450_E_grp-I"/>
</dbReference>
<dbReference type="InterPro" id="IPR036396">
    <property type="entry name" value="Cyt_P450_sf"/>
</dbReference>
<dbReference type="PANTHER" id="PTHR47950">
    <property type="entry name" value="CYTOCHROME P450, FAMILY 76, SUBFAMILY C, POLYPEPTIDE 5-RELATED"/>
    <property type="match status" value="1"/>
</dbReference>
<dbReference type="PANTHER" id="PTHR47950:SF44">
    <property type="entry name" value="CYTOCHROME P450, FAMILY 76, SUBFAMILY C, POLYPEPTIDE 5-RELATED"/>
    <property type="match status" value="1"/>
</dbReference>
<dbReference type="Pfam" id="PF00067">
    <property type="entry name" value="p450"/>
    <property type="match status" value="1"/>
</dbReference>
<dbReference type="PRINTS" id="PR00463">
    <property type="entry name" value="EP450I"/>
</dbReference>
<dbReference type="PRINTS" id="PR00385">
    <property type="entry name" value="P450"/>
</dbReference>
<dbReference type="SUPFAM" id="SSF48264">
    <property type="entry name" value="Cytochrome P450"/>
    <property type="match status" value="1"/>
</dbReference>
<dbReference type="PROSITE" id="PS00086">
    <property type="entry name" value="CYTOCHROME_P450"/>
    <property type="match status" value="1"/>
</dbReference>
<protein>
    <recommendedName>
        <fullName evidence="6">Cytochrome P450 76M5</fullName>
        <ecNumber evidence="4">1.14.14.122</ecNumber>
    </recommendedName>
</protein>
<accession>Q6YTF5</accession>
<accession>A0A0P0VKM0</accession>
<accession>A3A866</accession>
<reference key="1">
    <citation type="journal article" date="2005" name="Nature">
        <title>The map-based sequence of the rice genome.</title>
        <authorList>
            <consortium name="International rice genome sequencing project (IRGSP)"/>
        </authorList>
    </citation>
    <scope>NUCLEOTIDE SEQUENCE [LARGE SCALE GENOMIC DNA]</scope>
    <source>
        <strain>cv. Nipponbare</strain>
    </source>
</reference>
<reference key="2">
    <citation type="journal article" date="2008" name="Nucleic Acids Res.">
        <title>The rice annotation project database (RAP-DB): 2008 update.</title>
        <authorList>
            <consortium name="The rice annotation project (RAP)"/>
        </authorList>
    </citation>
    <scope>GENOME REANNOTATION</scope>
    <source>
        <strain>cv. Nipponbare</strain>
    </source>
</reference>
<reference key="3">
    <citation type="journal article" date="2013" name="Rice">
        <title>Improvement of the Oryza sativa Nipponbare reference genome using next generation sequence and optical map data.</title>
        <authorList>
            <person name="Kawahara Y."/>
            <person name="de la Bastide M."/>
            <person name="Hamilton J.P."/>
            <person name="Kanamori H."/>
            <person name="McCombie W.R."/>
            <person name="Ouyang S."/>
            <person name="Schwartz D.C."/>
            <person name="Tanaka T."/>
            <person name="Wu J."/>
            <person name="Zhou S."/>
            <person name="Childs K.L."/>
            <person name="Davidson R.M."/>
            <person name="Lin H."/>
            <person name="Quesada-Ocampo L."/>
            <person name="Vaillancourt B."/>
            <person name="Sakai H."/>
            <person name="Lee S.S."/>
            <person name="Kim J."/>
            <person name="Numa H."/>
            <person name="Itoh T."/>
            <person name="Buell C.R."/>
            <person name="Matsumoto T."/>
        </authorList>
    </citation>
    <scope>GENOME REANNOTATION</scope>
    <source>
        <strain>cv. Nipponbare</strain>
    </source>
</reference>
<reference key="4">
    <citation type="journal article" date="2005" name="PLoS Biol.">
        <title>The genomes of Oryza sativa: a history of duplications.</title>
        <authorList>
            <person name="Yu J."/>
            <person name="Wang J."/>
            <person name="Lin W."/>
            <person name="Li S."/>
            <person name="Li H."/>
            <person name="Zhou J."/>
            <person name="Ni P."/>
            <person name="Dong W."/>
            <person name="Hu S."/>
            <person name="Zeng C."/>
            <person name="Zhang J."/>
            <person name="Zhang Y."/>
            <person name="Li R."/>
            <person name="Xu Z."/>
            <person name="Li S."/>
            <person name="Li X."/>
            <person name="Zheng H."/>
            <person name="Cong L."/>
            <person name="Lin L."/>
            <person name="Yin J."/>
            <person name="Geng J."/>
            <person name="Li G."/>
            <person name="Shi J."/>
            <person name="Liu J."/>
            <person name="Lv H."/>
            <person name="Li J."/>
            <person name="Wang J."/>
            <person name="Deng Y."/>
            <person name="Ran L."/>
            <person name="Shi X."/>
            <person name="Wang X."/>
            <person name="Wu Q."/>
            <person name="Li C."/>
            <person name="Ren X."/>
            <person name="Wang J."/>
            <person name="Wang X."/>
            <person name="Li D."/>
            <person name="Liu D."/>
            <person name="Zhang X."/>
            <person name="Ji Z."/>
            <person name="Zhao W."/>
            <person name="Sun Y."/>
            <person name="Zhang Z."/>
            <person name="Bao J."/>
            <person name="Han Y."/>
            <person name="Dong L."/>
            <person name="Ji J."/>
            <person name="Chen P."/>
            <person name="Wu S."/>
            <person name="Liu J."/>
            <person name="Xiao Y."/>
            <person name="Bu D."/>
            <person name="Tan J."/>
            <person name="Yang L."/>
            <person name="Ye C."/>
            <person name="Zhang J."/>
            <person name="Xu J."/>
            <person name="Zhou Y."/>
            <person name="Yu Y."/>
            <person name="Zhang B."/>
            <person name="Zhuang S."/>
            <person name="Wei H."/>
            <person name="Liu B."/>
            <person name="Lei M."/>
            <person name="Yu H."/>
            <person name="Li Y."/>
            <person name="Xu H."/>
            <person name="Wei S."/>
            <person name="He X."/>
            <person name="Fang L."/>
            <person name="Zhang Z."/>
            <person name="Zhang Y."/>
            <person name="Huang X."/>
            <person name="Su Z."/>
            <person name="Tong W."/>
            <person name="Li J."/>
            <person name="Tong Z."/>
            <person name="Li S."/>
            <person name="Ye J."/>
            <person name="Wang L."/>
            <person name="Fang L."/>
            <person name="Lei T."/>
            <person name="Chen C.-S."/>
            <person name="Chen H.-C."/>
            <person name="Xu Z."/>
            <person name="Li H."/>
            <person name="Huang H."/>
            <person name="Zhang F."/>
            <person name="Xu H."/>
            <person name="Li N."/>
            <person name="Zhao C."/>
            <person name="Li S."/>
            <person name="Dong L."/>
            <person name="Huang Y."/>
            <person name="Li L."/>
            <person name="Xi Y."/>
            <person name="Qi Q."/>
            <person name="Li W."/>
            <person name="Zhang B."/>
            <person name="Hu W."/>
            <person name="Zhang Y."/>
            <person name="Tian X."/>
            <person name="Jiao Y."/>
            <person name="Liang X."/>
            <person name="Jin J."/>
            <person name="Gao L."/>
            <person name="Zheng W."/>
            <person name="Hao B."/>
            <person name="Liu S.-M."/>
            <person name="Wang W."/>
            <person name="Yuan L."/>
            <person name="Cao M."/>
            <person name="McDermott J."/>
            <person name="Samudrala R."/>
            <person name="Wang J."/>
            <person name="Wong G.K.-S."/>
            <person name="Yang H."/>
        </authorList>
    </citation>
    <scope>NUCLEOTIDE SEQUENCE [LARGE SCALE GENOMIC DNA]</scope>
    <source>
        <strain>cv. Nipponbare</strain>
    </source>
</reference>
<reference key="5">
    <citation type="journal article" date="2003" name="Science">
        <title>Collection, mapping, and annotation of over 28,000 cDNA clones from japonica rice.</title>
        <authorList>
            <consortium name="The rice full-length cDNA consortium"/>
        </authorList>
    </citation>
    <scope>NUCLEOTIDE SEQUENCE [LARGE SCALE MRNA]</scope>
    <source>
        <strain>cv. Nipponbare</strain>
    </source>
</reference>
<reference key="6">
    <citation type="journal article" date="2012" name="J. Biol. Chem.">
        <title>Characterization of CYP76M5-8 indicates metabolic plasticity within a plant biosynthetic gene cluster.</title>
        <authorList>
            <person name="Wang Q."/>
            <person name="Hillwig M.L."/>
            <person name="Okada K."/>
            <person name="Yamazaki K."/>
            <person name="Wu Y."/>
            <person name="Swaminathan S."/>
            <person name="Yamane H."/>
            <person name="Peters R.J."/>
        </authorList>
    </citation>
    <scope>FUNCTION</scope>
    <scope>CATALYTIC ACTIVITY</scope>
    <scope>INDUCTION BY METHYL JASMONATE</scope>
</reference>
<evidence type="ECO:0000250" key="1">
    <source>
        <dbReference type="UniProtKB" id="P04798"/>
    </source>
</evidence>
<evidence type="ECO:0000255" key="2"/>
<evidence type="ECO:0000255" key="3">
    <source>
        <dbReference type="RuleBase" id="RU000461"/>
    </source>
</evidence>
<evidence type="ECO:0000269" key="4">
    <source>
    </source>
</evidence>
<evidence type="ECO:0000303" key="5">
    <source>
    </source>
</evidence>
<evidence type="ECO:0000305" key="6"/>
<evidence type="ECO:0000312" key="7">
    <source>
        <dbReference type="EMBL" id="BAD17782.1"/>
    </source>
</evidence>
<evidence type="ECO:0000312" key="8">
    <source>
        <dbReference type="EMBL" id="BAF09097.1"/>
    </source>
</evidence>
<evidence type="ECO:0000312" key="9">
    <source>
        <dbReference type="EMBL" id="EAZ23505.1"/>
    </source>
</evidence>